<evidence type="ECO:0000269" key="1">
    <source>
    </source>
</evidence>
<evidence type="ECO:0000269" key="2">
    <source>
    </source>
</evidence>
<evidence type="ECO:0000269" key="3">
    <source>
    </source>
</evidence>
<evidence type="ECO:0000269" key="4">
    <source>
    </source>
</evidence>
<evidence type="ECO:0000269" key="5">
    <source>
    </source>
</evidence>
<evidence type="ECO:0000305" key="6"/>
<evidence type="ECO:0007829" key="7">
    <source>
        <dbReference type="PDB" id="5YDU"/>
    </source>
</evidence>
<feature type="chain" id="PRO_0000203217" description="Ribosome biogenesis protein UTP30">
    <location>
        <begin position="1"/>
        <end position="274"/>
    </location>
</feature>
<feature type="helix" evidence="7">
    <location>
        <begin position="12"/>
        <end position="26"/>
    </location>
</feature>
<feature type="helix" evidence="7">
    <location>
        <begin position="28"/>
        <end position="30"/>
    </location>
</feature>
<feature type="strand" evidence="7">
    <location>
        <begin position="35"/>
        <end position="44"/>
    </location>
</feature>
<feature type="strand" evidence="7">
    <location>
        <begin position="55"/>
        <end position="57"/>
    </location>
</feature>
<feature type="helix" evidence="7">
    <location>
        <begin position="67"/>
        <end position="69"/>
    </location>
</feature>
<feature type="strand" evidence="7">
    <location>
        <begin position="72"/>
        <end position="79"/>
    </location>
</feature>
<feature type="helix" evidence="7">
    <location>
        <begin position="81"/>
        <end position="88"/>
    </location>
</feature>
<feature type="turn" evidence="7">
    <location>
        <begin position="91"/>
        <end position="96"/>
    </location>
</feature>
<feature type="strand" evidence="7">
    <location>
        <begin position="98"/>
        <end position="102"/>
    </location>
</feature>
<feature type="helix" evidence="7">
    <location>
        <begin position="103"/>
        <end position="109"/>
    </location>
</feature>
<feature type="helix" evidence="7">
    <location>
        <begin position="112"/>
        <end position="116"/>
    </location>
</feature>
<feature type="strand" evidence="7">
    <location>
        <begin position="123"/>
        <end position="128"/>
    </location>
</feature>
<feature type="helix" evidence="7">
    <location>
        <begin position="129"/>
        <end position="134"/>
    </location>
</feature>
<feature type="strand" evidence="7">
    <location>
        <begin position="152"/>
        <end position="154"/>
    </location>
</feature>
<feature type="helix" evidence="7">
    <location>
        <begin position="173"/>
        <end position="185"/>
    </location>
</feature>
<feature type="strand" evidence="7">
    <location>
        <begin position="186"/>
        <end position="189"/>
    </location>
</feature>
<feature type="strand" evidence="7">
    <location>
        <begin position="195"/>
        <end position="204"/>
    </location>
</feature>
<feature type="helix" evidence="7">
    <location>
        <begin position="209"/>
        <end position="223"/>
    </location>
</feature>
<feature type="helix" evidence="7">
    <location>
        <begin position="226"/>
        <end position="228"/>
    </location>
</feature>
<feature type="turn" evidence="7">
    <location>
        <begin position="229"/>
        <end position="231"/>
    </location>
</feature>
<feature type="strand" evidence="7">
    <location>
        <begin position="239"/>
        <end position="245"/>
    </location>
</feature>
<feature type="strand" evidence="7">
    <location>
        <begin position="247"/>
        <end position="249"/>
    </location>
</feature>
<feature type="strand" evidence="7">
    <location>
        <begin position="252"/>
        <end position="255"/>
    </location>
</feature>
<reference key="1">
    <citation type="journal article" date="1994" name="Nature">
        <title>Complete DNA sequence of yeast chromosome XI.</title>
        <authorList>
            <person name="Dujon B."/>
            <person name="Alexandraki D."/>
            <person name="Andre B."/>
            <person name="Ansorge W."/>
            <person name="Baladron V."/>
            <person name="Ballesta J.P.G."/>
            <person name="Banrevi A."/>
            <person name="Bolle P.-A."/>
            <person name="Bolotin-Fukuhara M."/>
            <person name="Bossier P."/>
            <person name="Bou G."/>
            <person name="Boyer J."/>
            <person name="Buitrago M.J."/>
            <person name="Cheret G."/>
            <person name="Colleaux L."/>
            <person name="Daignan-Fornier B."/>
            <person name="del Rey F."/>
            <person name="Dion C."/>
            <person name="Domdey H."/>
            <person name="Duesterhoeft A."/>
            <person name="Duesterhus S."/>
            <person name="Entian K.-D."/>
            <person name="Erfle H."/>
            <person name="Esteban P.F."/>
            <person name="Feldmann H."/>
            <person name="Fernandes L."/>
            <person name="Fobo G.M."/>
            <person name="Fritz C."/>
            <person name="Fukuhara H."/>
            <person name="Gabel C."/>
            <person name="Gaillon L."/>
            <person name="Garcia-Cantalejo J.M."/>
            <person name="Garcia-Ramirez J.J."/>
            <person name="Gent M.E."/>
            <person name="Ghazvini M."/>
            <person name="Goffeau A."/>
            <person name="Gonzalez A."/>
            <person name="Grothues D."/>
            <person name="Guerreiro P."/>
            <person name="Hegemann J.H."/>
            <person name="Hewitt N."/>
            <person name="Hilger F."/>
            <person name="Hollenberg C.P."/>
            <person name="Horaitis O."/>
            <person name="Indge K.J."/>
            <person name="Jacquier A."/>
            <person name="James C.M."/>
            <person name="Jauniaux J.-C."/>
            <person name="Jimenez A."/>
            <person name="Keuchel H."/>
            <person name="Kirchrath L."/>
            <person name="Kleine K."/>
            <person name="Koetter P."/>
            <person name="Legrain P."/>
            <person name="Liebl S."/>
            <person name="Louis E.J."/>
            <person name="Maia e Silva A."/>
            <person name="Marck C."/>
            <person name="Monnier A.-L."/>
            <person name="Moestl D."/>
            <person name="Mueller S."/>
            <person name="Obermaier B."/>
            <person name="Oliver S.G."/>
            <person name="Pallier C."/>
            <person name="Pascolo S."/>
            <person name="Pfeiffer F."/>
            <person name="Philippsen P."/>
            <person name="Planta R.J."/>
            <person name="Pohl F.M."/>
            <person name="Pohl T.M."/>
            <person name="Poehlmann R."/>
            <person name="Portetelle D."/>
            <person name="Purnelle B."/>
            <person name="Puzos V."/>
            <person name="Ramezani Rad M."/>
            <person name="Rasmussen S.W."/>
            <person name="Remacha M.A."/>
            <person name="Revuelta J.L."/>
            <person name="Richard G.-F."/>
            <person name="Rieger M."/>
            <person name="Rodrigues-Pousada C."/>
            <person name="Rose M."/>
            <person name="Rupp T."/>
            <person name="Santos M.A."/>
            <person name="Schwager C."/>
            <person name="Sensen C."/>
            <person name="Skala J."/>
            <person name="Soares H."/>
            <person name="Sor F."/>
            <person name="Stegemann J."/>
            <person name="Tettelin H."/>
            <person name="Thierry A."/>
            <person name="Tzermia M."/>
            <person name="Urrestarazu L.A."/>
            <person name="van Dyck L."/>
            <person name="van Vliet-Reedijk J.C."/>
            <person name="Valens M."/>
            <person name="Vandenbol M."/>
            <person name="Vilela C."/>
            <person name="Vissers S."/>
            <person name="von Wettstein D."/>
            <person name="Voss H."/>
            <person name="Wiemann S."/>
            <person name="Xu G."/>
            <person name="Zimmermann J."/>
            <person name="Haasemann M."/>
            <person name="Becker I."/>
            <person name="Mewes H.-W."/>
        </authorList>
    </citation>
    <scope>NUCLEOTIDE SEQUENCE [LARGE SCALE GENOMIC DNA]</scope>
    <source>
        <strain>ATCC 204508 / S288c</strain>
    </source>
</reference>
<reference key="2">
    <citation type="journal article" date="2014" name="G3 (Bethesda)">
        <title>The reference genome sequence of Saccharomyces cerevisiae: Then and now.</title>
        <authorList>
            <person name="Engel S.R."/>
            <person name="Dietrich F.S."/>
            <person name="Fisk D.G."/>
            <person name="Binkley G."/>
            <person name="Balakrishnan R."/>
            <person name="Costanzo M.C."/>
            <person name="Dwight S.S."/>
            <person name="Hitz B.C."/>
            <person name="Karra K."/>
            <person name="Nash R.S."/>
            <person name="Weng S."/>
            <person name="Wong E.D."/>
            <person name="Lloyd P."/>
            <person name="Skrzypek M.S."/>
            <person name="Miyasato S.R."/>
            <person name="Simison M."/>
            <person name="Cherry J.M."/>
        </authorList>
    </citation>
    <scope>GENOME REANNOTATION</scope>
    <source>
        <strain>ATCC 204508 / S288c</strain>
    </source>
</reference>
<reference key="3">
    <citation type="journal article" date="2007" name="Genome Res.">
        <title>Approaching a complete repository of sequence-verified protein-encoding clones for Saccharomyces cerevisiae.</title>
        <authorList>
            <person name="Hu Y."/>
            <person name="Rolfs A."/>
            <person name="Bhullar B."/>
            <person name="Murthy T.V.S."/>
            <person name="Zhu C."/>
            <person name="Berger M.F."/>
            <person name="Camargo A.A."/>
            <person name="Kelley F."/>
            <person name="McCarron S."/>
            <person name="Jepson D."/>
            <person name="Richardson A."/>
            <person name="Raphael J."/>
            <person name="Moreira D."/>
            <person name="Taycher E."/>
            <person name="Zuo D."/>
            <person name="Mohr S."/>
            <person name="Kane M.F."/>
            <person name="Williamson J."/>
            <person name="Simpson A.J.G."/>
            <person name="Bulyk M.L."/>
            <person name="Harlow E."/>
            <person name="Marsischky G."/>
            <person name="Kolodner R.D."/>
            <person name="LaBaer J."/>
        </authorList>
    </citation>
    <scope>NUCLEOTIDE SEQUENCE [GENOMIC DNA]</scope>
    <source>
        <strain>ATCC 204508 / S288c</strain>
    </source>
</reference>
<reference key="4">
    <citation type="journal article" date="2002" name="Mol. Cell">
        <title>90S pre-ribosomes include the 35S pre-rRNA, the U3 snoRNP, and 40S subunit processing factors but predominantly lack 60S synthesis factors.</title>
        <authorList>
            <person name="Grandi P."/>
            <person name="Rybin V."/>
            <person name="Bassler J."/>
            <person name="Petfalski E."/>
            <person name="Strauss D."/>
            <person name="Marzioch M."/>
            <person name="Schaefer T."/>
            <person name="Kuster B."/>
            <person name="Tschochner H."/>
            <person name="Tollervey D."/>
            <person name="Gavin A.-C."/>
            <person name="Hurt E."/>
        </authorList>
    </citation>
    <scope>IDENTIFICATION IN THE 90S PRE-RIBOSOME</scope>
    <scope>IDENTIFICATION BY MASS SPECTROMETRY</scope>
</reference>
<reference key="5">
    <citation type="journal article" date="2003" name="Nature">
        <title>Global analysis of protein localization in budding yeast.</title>
        <authorList>
            <person name="Huh W.-K."/>
            <person name="Falvo J.V."/>
            <person name="Gerke L.C."/>
            <person name="Carroll A.S."/>
            <person name="Howson R.W."/>
            <person name="Weissman J.S."/>
            <person name="O'Shea E.K."/>
        </authorList>
    </citation>
    <scope>SUBCELLULAR LOCATION [LARGE SCALE ANALYSIS]</scope>
</reference>
<reference key="6">
    <citation type="journal article" date="2003" name="Nature">
        <title>Global analysis of protein expression in yeast.</title>
        <authorList>
            <person name="Ghaemmaghami S."/>
            <person name="Huh W.-K."/>
            <person name="Bower K."/>
            <person name="Howson R.W."/>
            <person name="Belle A."/>
            <person name="Dephoure N."/>
            <person name="O'Shea E.K."/>
            <person name="Weissman J.S."/>
        </authorList>
    </citation>
    <scope>LEVEL OF PROTEIN EXPRESSION [LARGE SCALE ANALYSIS]</scope>
</reference>
<reference key="7">
    <citation type="journal article" date="2006" name="Biochem. Biophys. Res. Commun.">
        <title>Fcf1p and Fcf2p are novel nucleolar Saccharomyces cerevisiae proteins involved in pre-rRNA processing.</title>
        <authorList>
            <person name="Rempola B."/>
            <person name="Karkusiewicz I."/>
            <person name="Piekarska I."/>
            <person name="Rytka J."/>
        </authorList>
    </citation>
    <scope>INTERACTION WITH FAF1</scope>
</reference>
<reference key="8">
    <citation type="journal article" date="2006" name="Yeast">
        <title>The budding yeast rRNA and ribosome biosynthesis (RRB) regulon contains over 200 genes.</title>
        <authorList>
            <person name="Wade C.H."/>
            <person name="Umbarger M.A."/>
            <person name="McAlear M.A."/>
        </authorList>
    </citation>
    <scope>FUNCTION</scope>
</reference>
<keyword id="KW-0002">3D-structure</keyword>
<keyword id="KW-0539">Nucleus</keyword>
<keyword id="KW-1185">Reference proteome</keyword>
<keyword id="KW-0690">Ribosome biogenesis</keyword>
<keyword id="KW-0698">rRNA processing</keyword>
<comment type="function">
    <text evidence="4">Involved in rRNA-processing and ribosome biosynthesis.</text>
</comment>
<comment type="subunit">
    <text evidence="1 5">Component of the 90S pre-ribosomes. Interacts with FAF1.</text>
</comment>
<comment type="interaction">
    <interactant intactId="EBI-26459">
        <id>P36144</id>
    </interactant>
    <interactant intactId="EBI-4534">
        <id>P40362</id>
        <label>UTP18</label>
    </interactant>
    <organismsDiffer>false</organismsDiffer>
    <experiments>3</experiments>
</comment>
<comment type="subcellular location">
    <subcellularLocation>
        <location evidence="2">Nucleus</location>
        <location evidence="2">Nucleolus</location>
    </subcellularLocation>
</comment>
<comment type="miscellaneous">
    <text evidence="3">Present with 3060 molecules/cell in log phase SD medium.</text>
</comment>
<comment type="similarity">
    <text evidence="6">Belongs to the universal ribosomal protein uL1 family. Highly divergent.</text>
</comment>
<gene>
    <name type="primary">UTP30</name>
    <name type="ordered locus">YKR060W</name>
</gene>
<dbReference type="EMBL" id="Z28285">
    <property type="protein sequence ID" value="CAA82139.1"/>
    <property type="molecule type" value="Genomic_DNA"/>
</dbReference>
<dbReference type="EMBL" id="AY557907">
    <property type="protein sequence ID" value="AAS56233.1"/>
    <property type="molecule type" value="Genomic_DNA"/>
</dbReference>
<dbReference type="EMBL" id="BK006944">
    <property type="protein sequence ID" value="DAA09211.1"/>
    <property type="molecule type" value="Genomic_DNA"/>
</dbReference>
<dbReference type="PIR" id="S38136">
    <property type="entry name" value="S38136"/>
</dbReference>
<dbReference type="RefSeq" id="NP_012986.1">
    <property type="nucleotide sequence ID" value="NM_001179850.1"/>
</dbReference>
<dbReference type="PDB" id="5WLC">
    <property type="method" value="EM"/>
    <property type="resolution" value="3.80 A"/>
    <property type="chains" value="SN=1-274"/>
</dbReference>
<dbReference type="PDB" id="5WYJ">
    <property type="method" value="EM"/>
    <property type="resolution" value="8.70 A"/>
    <property type="chains" value="U5=1-274"/>
</dbReference>
<dbReference type="PDB" id="5WYK">
    <property type="method" value="EM"/>
    <property type="resolution" value="4.50 A"/>
    <property type="chains" value="U5=1-274"/>
</dbReference>
<dbReference type="PDB" id="5YDT">
    <property type="method" value="EM"/>
    <property type="resolution" value="4.50 A"/>
    <property type="chains" value="U5=1-274"/>
</dbReference>
<dbReference type="PDB" id="5YDU">
    <property type="method" value="X-ray"/>
    <property type="resolution" value="2.65 A"/>
    <property type="chains" value="A/B=1-274"/>
</dbReference>
<dbReference type="PDB" id="6KE6">
    <property type="method" value="EM"/>
    <property type="resolution" value="3.40 A"/>
    <property type="chains" value="RI=1-274"/>
</dbReference>
<dbReference type="PDB" id="6LQP">
    <property type="method" value="EM"/>
    <property type="resolution" value="3.20 A"/>
    <property type="chains" value="RI=1-274"/>
</dbReference>
<dbReference type="PDB" id="6LQU">
    <property type="method" value="EM"/>
    <property type="resolution" value="3.70 A"/>
    <property type="chains" value="RI=1-274"/>
</dbReference>
<dbReference type="PDB" id="6ZQA">
    <property type="method" value="EM"/>
    <property type="resolution" value="4.40 A"/>
    <property type="chains" value="UZ=1-274"/>
</dbReference>
<dbReference type="PDB" id="6ZQB">
    <property type="method" value="EM"/>
    <property type="resolution" value="3.90 A"/>
    <property type="chains" value="UZ=1-274"/>
</dbReference>
<dbReference type="PDB" id="6ZQC">
    <property type="method" value="EM"/>
    <property type="resolution" value="3.80 A"/>
    <property type="chains" value="UZ=1-274"/>
</dbReference>
<dbReference type="PDB" id="7AJT">
    <property type="method" value="EM"/>
    <property type="resolution" value="4.60 A"/>
    <property type="chains" value="UZ=1-274"/>
</dbReference>
<dbReference type="PDB" id="7D5S">
    <property type="method" value="EM"/>
    <property type="resolution" value="4.60 A"/>
    <property type="chains" value="RI=1-274"/>
</dbReference>
<dbReference type="PDB" id="7SUK">
    <property type="method" value="EM"/>
    <property type="resolution" value="3.99 A"/>
    <property type="chains" value="SN=11-257"/>
</dbReference>
<dbReference type="PDBsum" id="5WLC"/>
<dbReference type="PDBsum" id="5WYJ"/>
<dbReference type="PDBsum" id="5WYK"/>
<dbReference type="PDBsum" id="5YDT"/>
<dbReference type="PDBsum" id="5YDU"/>
<dbReference type="PDBsum" id="6KE6"/>
<dbReference type="PDBsum" id="6LQP"/>
<dbReference type="PDBsum" id="6LQU"/>
<dbReference type="PDBsum" id="6ZQA"/>
<dbReference type="PDBsum" id="6ZQB"/>
<dbReference type="PDBsum" id="6ZQC"/>
<dbReference type="PDBsum" id="7AJT"/>
<dbReference type="PDBsum" id="7D5S"/>
<dbReference type="PDBsum" id="7SUK"/>
<dbReference type="EMDB" id="EMD-0949"/>
<dbReference type="EMDB" id="EMD-0954"/>
<dbReference type="EMDB" id="EMD-11357"/>
<dbReference type="EMDB" id="EMD-11358"/>
<dbReference type="EMDB" id="EMD-11359"/>
<dbReference type="EMDB" id="EMD-11807"/>
<dbReference type="EMDB" id="EMD-25441"/>
<dbReference type="EMDB" id="EMD-30584"/>
<dbReference type="EMDB" id="EMD-6695"/>
<dbReference type="EMDB" id="EMD-6696"/>
<dbReference type="EMDB" id="EMD-8859"/>
<dbReference type="EMDB" id="EMD-9964"/>
<dbReference type="SMR" id="P36144"/>
<dbReference type="BioGRID" id="34191">
    <property type="interactions" value="161"/>
</dbReference>
<dbReference type="ComplexPortal" id="CPX-1604">
    <property type="entry name" value="Small ribosomal subunit processome"/>
</dbReference>
<dbReference type="DIP" id="DIP-1926N"/>
<dbReference type="FunCoup" id="P36144">
    <property type="interactions" value="443"/>
</dbReference>
<dbReference type="IntAct" id="P36144">
    <property type="interactions" value="67"/>
</dbReference>
<dbReference type="MINT" id="P36144"/>
<dbReference type="STRING" id="4932.YKR060W"/>
<dbReference type="iPTMnet" id="P36144"/>
<dbReference type="PaxDb" id="4932-YKR060W"/>
<dbReference type="PeptideAtlas" id="P36144"/>
<dbReference type="EnsemblFungi" id="YKR060W_mRNA">
    <property type="protein sequence ID" value="YKR060W"/>
    <property type="gene ID" value="YKR060W"/>
</dbReference>
<dbReference type="GeneID" id="853934"/>
<dbReference type="KEGG" id="sce:YKR060W"/>
<dbReference type="AGR" id="SGD:S000001768"/>
<dbReference type="SGD" id="S000001768">
    <property type="gene designation" value="UTP30"/>
</dbReference>
<dbReference type="VEuPathDB" id="FungiDB:YKR060W"/>
<dbReference type="eggNOG" id="KOG1685">
    <property type="taxonomic scope" value="Eukaryota"/>
</dbReference>
<dbReference type="HOGENOM" id="CLU_063901_0_0_1"/>
<dbReference type="InParanoid" id="P36144"/>
<dbReference type="OMA" id="ADFRVHH"/>
<dbReference type="OrthoDB" id="10251727at2759"/>
<dbReference type="BioCyc" id="YEAST:G3O-32028-MONOMER"/>
<dbReference type="BioGRID-ORCS" id="853934">
    <property type="hits" value="1 hit in 10 CRISPR screens"/>
</dbReference>
<dbReference type="PRO" id="PR:P36144"/>
<dbReference type="Proteomes" id="UP000002311">
    <property type="component" value="Chromosome XI"/>
</dbReference>
<dbReference type="RNAct" id="P36144">
    <property type="molecule type" value="protein"/>
</dbReference>
<dbReference type="GO" id="GO:0030686">
    <property type="term" value="C:90S preribosome"/>
    <property type="evidence" value="ECO:0000314"/>
    <property type="project" value="GO_Central"/>
</dbReference>
<dbReference type="GO" id="GO:0005730">
    <property type="term" value="C:nucleolus"/>
    <property type="evidence" value="ECO:0000314"/>
    <property type="project" value="GO_Central"/>
</dbReference>
<dbReference type="GO" id="GO:0005634">
    <property type="term" value="C:nucleus"/>
    <property type="evidence" value="ECO:0007005"/>
    <property type="project" value="SGD"/>
</dbReference>
<dbReference type="GO" id="GO:0032040">
    <property type="term" value="C:small-subunit processome"/>
    <property type="evidence" value="ECO:0000353"/>
    <property type="project" value="ComplexPortal"/>
</dbReference>
<dbReference type="GO" id="GO:0003723">
    <property type="term" value="F:RNA binding"/>
    <property type="evidence" value="ECO:0000318"/>
    <property type="project" value="GO_Central"/>
</dbReference>
<dbReference type="GO" id="GO:0030490">
    <property type="term" value="P:maturation of SSU-rRNA"/>
    <property type="evidence" value="ECO:0000303"/>
    <property type="project" value="ComplexPortal"/>
</dbReference>
<dbReference type="GO" id="GO:0000462">
    <property type="term" value="P:maturation of SSU-rRNA from tricistronic rRNA transcript (SSU-rRNA, 5.8S rRNA, LSU-rRNA)"/>
    <property type="evidence" value="ECO:0000316"/>
    <property type="project" value="GO_Central"/>
</dbReference>
<dbReference type="GO" id="GO:0042274">
    <property type="term" value="P:ribosomal small subunit biogenesis"/>
    <property type="evidence" value="ECO:0000353"/>
    <property type="project" value="SGD"/>
</dbReference>
<dbReference type="InterPro" id="IPR050257">
    <property type="entry name" value="eL8/uL1-like"/>
</dbReference>
<dbReference type="InterPro" id="IPR023674">
    <property type="entry name" value="Ribosomal_uL1-like"/>
</dbReference>
<dbReference type="InterPro" id="IPR028364">
    <property type="entry name" value="Ribosomal_uL1/biogenesis"/>
</dbReference>
<dbReference type="PANTHER" id="PTHR23105">
    <property type="entry name" value="RIBOSOMAL PROTEIN L7AE FAMILY MEMBER"/>
    <property type="match status" value="1"/>
</dbReference>
<dbReference type="Pfam" id="PF00687">
    <property type="entry name" value="Ribosomal_L1"/>
    <property type="match status" value="1"/>
</dbReference>
<dbReference type="SUPFAM" id="SSF56808">
    <property type="entry name" value="Ribosomal protein L1"/>
    <property type="match status" value="1"/>
</dbReference>
<proteinExistence type="evidence at protein level"/>
<accession>P36144</accession>
<accession>D6VXC1</accession>
<protein>
    <recommendedName>
        <fullName>Ribosome biogenesis protein UTP30</fullName>
    </recommendedName>
    <alternativeName>
        <fullName>U3 snoRNP-associated protein UTP30</fullName>
    </alternativeName>
</protein>
<name>RL1D1_YEAST</name>
<organism>
    <name type="scientific">Saccharomyces cerevisiae (strain ATCC 204508 / S288c)</name>
    <name type="common">Baker's yeast</name>
    <dbReference type="NCBI Taxonomy" id="559292"/>
    <lineage>
        <taxon>Eukaryota</taxon>
        <taxon>Fungi</taxon>
        <taxon>Dikarya</taxon>
        <taxon>Ascomycota</taxon>
        <taxon>Saccharomycotina</taxon>
        <taxon>Saccharomycetes</taxon>
        <taxon>Saccharomycetales</taxon>
        <taxon>Saccharomycetaceae</taxon>
        <taxon>Saccharomyces</taxon>
    </lineage>
</organism>
<sequence>MVESNDIIKSGLAEKALKALILQCEENPSLKNDKDIHIIINTGKKMGINRDNIPRIIPLTKYKLFKPRDLNILLITKDPSALYRETLTKDEHTSELFKEIISVKNLRRRFKGSKLTQLYKDFDLVVADYRVHHLLPEVLGSRFYHGSKKLPYMIRMSKEVKLKRQQMVEKCDPIYVRAQLRSICKNTSYIPNNDNCLSVRVGYIQKHSIPEILQNIQDTINFLTDKSKRPQGGVIKGGIISIFVKTSNSTSLPIYQFSEARENQKNEDLSDIKL</sequence>